<feature type="chain" id="PRO_1000141661" description="DNA-directed RNA polymerase subunit beta">
    <location>
        <begin position="1"/>
        <end position="1187"/>
    </location>
</feature>
<feature type="region of interest" description="Disordered" evidence="2">
    <location>
        <begin position="1150"/>
        <end position="1187"/>
    </location>
</feature>
<feature type="compositionally biased region" description="Basic and acidic residues" evidence="2">
    <location>
        <begin position="1173"/>
        <end position="1187"/>
    </location>
</feature>
<proteinExistence type="inferred from homology"/>
<sequence length="1187" mass="131644">MATESTTNTTTIIARADQHDIDLHKASDRVNFGSIKEPIDVPYLLGVQTDSFDWLIGNERWKARVEEDEKNGTNTVAHTSGLDEVFNEISPIENFAQTMSLTFSDPYFEEPRHTVQECKEKDYTYSAPLYVNAEFENGDTGEIKSQTVFMGDFPLQTPHGTFIIGGTERVIVSQLVRSPGVYFDRQQDRTSDKEVFGAKIIPSRGAWLEFEIDKKDQPQVRVDRKRKQSAIVFLMAIGMTKSEIAQAFKDYPLVLDALEKETLGTQDEALVDLYRKIRPADTPTPEAGKNLLDSFYFNTKRYDLARVGRYKINRKLGVEADFNDRSLHQEDIIATIKYLVALHDGAATFPGKRNGEDVDLRVDVDDIDHFGNRRIRQVGELIQNQLRTGLSRMERVVRERMTTQDAEAITPQSLINIRPVNATIKEFFGTSQLSQFMDQNNPLSGVTNKRRLSALGPGGLSRDRASMEVRDVHPSHFGRMCPIESPEGPNIGLIGSLATFGRVNPFGFIETPYRKVVNGHVTDEVEYMTADRDLDHVIAQANQELDENGNFVQKSALARVGEEEAVDVPVSSVDYMDVSPRQMVSLGASLIPFLEHDEGHRALMGTNMQRQAVPLIESERPLVGTGSEWRAANDSGDVIKSEKDGVVTYVSADLIRVMNDDGTTSSYKLAKFQRSNQTTCYNQRPIVHDGERVEAGSVMADGPAIQNGDLALGKNLLIAFMPWNGYNYEDAVIISQRLVQDDTLSSIHIEEYEIDARETKLGAEEITRDLPNVGEDAVANLDERGIIRIGAEVEAGDILVGKVTPKGETELTPEERLLRAIFGEKSREVRDTSLRVPHGETGTVIGVKEITREDAEEDGDELPNGVNQMIRVYIAQHRKITVGDKLSGRHGNKGCISRILPEEDMPFLADGTPVDIMLNPLGVPSRMNLGQVLELHLGWIAHSGWDISLDPNLEAEWKKLIPSGAEKAEPNTPVATPVFDGVKPEVLKGLLSTTLPNRDGDRLVGPDGKATLFDGRTGEPYTKPISVGYMYMLKLHHLVDDKIHARSTGPYSMITQQPLGGKAQFGGQRFGEMEVWALEAYGAAYTLHEMMTTKSDDVDGRVRVYGAIVKGDNLPPAGIPESFKVLLKEMQSLSLNVEVLNAEGVAIDMKDEDDDPASSADDLGFNIGARPDAAAKEDQKAEEPEYQ</sequence>
<keyword id="KW-0240">DNA-directed RNA polymerase</keyword>
<keyword id="KW-0548">Nucleotidyltransferase</keyword>
<keyword id="KW-0804">Transcription</keyword>
<keyword id="KW-0808">Transferase</keyword>
<gene>
    <name evidence="1" type="primary">rpoB</name>
    <name type="ordered locus">BLD_0965</name>
</gene>
<comment type="function">
    <text evidence="1">DNA-dependent RNA polymerase catalyzes the transcription of DNA into RNA using the four ribonucleoside triphosphates as substrates.</text>
</comment>
<comment type="catalytic activity">
    <reaction evidence="1">
        <text>RNA(n) + a ribonucleoside 5'-triphosphate = RNA(n+1) + diphosphate</text>
        <dbReference type="Rhea" id="RHEA:21248"/>
        <dbReference type="Rhea" id="RHEA-COMP:14527"/>
        <dbReference type="Rhea" id="RHEA-COMP:17342"/>
        <dbReference type="ChEBI" id="CHEBI:33019"/>
        <dbReference type="ChEBI" id="CHEBI:61557"/>
        <dbReference type="ChEBI" id="CHEBI:140395"/>
        <dbReference type="EC" id="2.7.7.6"/>
    </reaction>
</comment>
<comment type="subunit">
    <text evidence="1">The RNAP catalytic core consists of 2 alpha, 1 beta, 1 beta' and 1 omega subunit. When a sigma factor is associated with the core the holoenzyme is formed, which can initiate transcription.</text>
</comment>
<comment type="similarity">
    <text evidence="1">Belongs to the RNA polymerase beta chain family.</text>
</comment>
<reference key="1">
    <citation type="journal article" date="2008" name="BMC Genomics">
        <title>Comparative genomic analysis of the gut bacterium Bifidobacterium longum reveals loci susceptible to deletion during pure culture growth.</title>
        <authorList>
            <person name="Lee J.H."/>
            <person name="Karamychev V.N."/>
            <person name="Kozyavkin S.A."/>
            <person name="Mills D."/>
            <person name="Pavlov A.R."/>
            <person name="Pavlova N.V."/>
            <person name="Polouchine N.N."/>
            <person name="Richardson P.M."/>
            <person name="Shakhova V.V."/>
            <person name="Slesarev A.I."/>
            <person name="Weimer B."/>
            <person name="O'Sullivan D.J."/>
        </authorList>
    </citation>
    <scope>NUCLEOTIDE SEQUENCE [LARGE SCALE GENOMIC DNA]</scope>
    <source>
        <strain>DJO10A</strain>
    </source>
</reference>
<dbReference type="EC" id="2.7.7.6" evidence="1"/>
<dbReference type="EMBL" id="CP000605">
    <property type="protein sequence ID" value="ACD98411.1"/>
    <property type="molecule type" value="Genomic_DNA"/>
</dbReference>
<dbReference type="RefSeq" id="WP_010080834.1">
    <property type="nucleotide sequence ID" value="NC_010816.1"/>
</dbReference>
<dbReference type="SMR" id="B3DTE2"/>
<dbReference type="KEGG" id="blj:BLD_0965"/>
<dbReference type="HOGENOM" id="CLU_000524_4_1_11"/>
<dbReference type="Proteomes" id="UP000002419">
    <property type="component" value="Chromosome"/>
</dbReference>
<dbReference type="GO" id="GO:0000428">
    <property type="term" value="C:DNA-directed RNA polymerase complex"/>
    <property type="evidence" value="ECO:0007669"/>
    <property type="project" value="UniProtKB-KW"/>
</dbReference>
<dbReference type="GO" id="GO:0003677">
    <property type="term" value="F:DNA binding"/>
    <property type="evidence" value="ECO:0007669"/>
    <property type="project" value="UniProtKB-UniRule"/>
</dbReference>
<dbReference type="GO" id="GO:0003899">
    <property type="term" value="F:DNA-directed RNA polymerase activity"/>
    <property type="evidence" value="ECO:0007669"/>
    <property type="project" value="UniProtKB-UniRule"/>
</dbReference>
<dbReference type="GO" id="GO:0032549">
    <property type="term" value="F:ribonucleoside binding"/>
    <property type="evidence" value="ECO:0007669"/>
    <property type="project" value="InterPro"/>
</dbReference>
<dbReference type="GO" id="GO:0006351">
    <property type="term" value="P:DNA-templated transcription"/>
    <property type="evidence" value="ECO:0007669"/>
    <property type="project" value="UniProtKB-UniRule"/>
</dbReference>
<dbReference type="CDD" id="cd00653">
    <property type="entry name" value="RNA_pol_B_RPB2"/>
    <property type="match status" value="1"/>
</dbReference>
<dbReference type="FunFam" id="3.90.1800.10:FF:000001">
    <property type="entry name" value="DNA-directed RNA polymerase subunit beta"/>
    <property type="match status" value="1"/>
</dbReference>
<dbReference type="Gene3D" id="2.40.50.100">
    <property type="match status" value="1"/>
</dbReference>
<dbReference type="Gene3D" id="2.40.50.150">
    <property type="match status" value="1"/>
</dbReference>
<dbReference type="Gene3D" id="3.90.1100.10">
    <property type="match status" value="1"/>
</dbReference>
<dbReference type="Gene3D" id="2.30.150.10">
    <property type="entry name" value="DNA-directed RNA polymerase, beta subunit, external 1 domain"/>
    <property type="match status" value="1"/>
</dbReference>
<dbReference type="Gene3D" id="2.40.270.10">
    <property type="entry name" value="DNA-directed RNA polymerase, subunit 2, domain 6"/>
    <property type="match status" value="1"/>
</dbReference>
<dbReference type="Gene3D" id="3.90.1800.10">
    <property type="entry name" value="RNA polymerase alpha subunit dimerisation domain"/>
    <property type="match status" value="1"/>
</dbReference>
<dbReference type="Gene3D" id="3.90.1110.10">
    <property type="entry name" value="RNA polymerase Rpb2, domain 2"/>
    <property type="match status" value="1"/>
</dbReference>
<dbReference type="HAMAP" id="MF_01321">
    <property type="entry name" value="RNApol_bact_RpoB"/>
    <property type="match status" value="1"/>
</dbReference>
<dbReference type="InterPro" id="IPR042107">
    <property type="entry name" value="DNA-dir_RNA_pol_bsu_ext_1_sf"/>
</dbReference>
<dbReference type="InterPro" id="IPR019462">
    <property type="entry name" value="DNA-dir_RNA_pol_bsu_external_1"/>
</dbReference>
<dbReference type="InterPro" id="IPR015712">
    <property type="entry name" value="DNA-dir_RNA_pol_su2"/>
</dbReference>
<dbReference type="InterPro" id="IPR007120">
    <property type="entry name" value="DNA-dir_RNAP_su2_dom"/>
</dbReference>
<dbReference type="InterPro" id="IPR037033">
    <property type="entry name" value="DNA-dir_RNAP_su2_hyb_sf"/>
</dbReference>
<dbReference type="InterPro" id="IPR010243">
    <property type="entry name" value="RNA_pol_bsu_bac"/>
</dbReference>
<dbReference type="InterPro" id="IPR007121">
    <property type="entry name" value="RNA_pol_bsu_CS"/>
</dbReference>
<dbReference type="InterPro" id="IPR007644">
    <property type="entry name" value="RNA_pol_bsu_protrusion"/>
</dbReference>
<dbReference type="InterPro" id="IPR007642">
    <property type="entry name" value="RNA_pol_Rpb2_2"/>
</dbReference>
<dbReference type="InterPro" id="IPR037034">
    <property type="entry name" value="RNA_pol_Rpb2_2_sf"/>
</dbReference>
<dbReference type="InterPro" id="IPR007645">
    <property type="entry name" value="RNA_pol_Rpb2_3"/>
</dbReference>
<dbReference type="InterPro" id="IPR007641">
    <property type="entry name" value="RNA_pol_Rpb2_7"/>
</dbReference>
<dbReference type="InterPro" id="IPR014724">
    <property type="entry name" value="RNA_pol_RPB2_OB-fold"/>
</dbReference>
<dbReference type="NCBIfam" id="NF001616">
    <property type="entry name" value="PRK00405.1"/>
    <property type="match status" value="1"/>
</dbReference>
<dbReference type="NCBIfam" id="TIGR02013">
    <property type="entry name" value="rpoB"/>
    <property type="match status" value="1"/>
</dbReference>
<dbReference type="PANTHER" id="PTHR20856">
    <property type="entry name" value="DNA-DIRECTED RNA POLYMERASE I SUBUNIT 2"/>
    <property type="match status" value="1"/>
</dbReference>
<dbReference type="Pfam" id="PF04563">
    <property type="entry name" value="RNA_pol_Rpb2_1"/>
    <property type="match status" value="1"/>
</dbReference>
<dbReference type="Pfam" id="PF04561">
    <property type="entry name" value="RNA_pol_Rpb2_2"/>
    <property type="match status" value="1"/>
</dbReference>
<dbReference type="Pfam" id="PF04565">
    <property type="entry name" value="RNA_pol_Rpb2_3"/>
    <property type="match status" value="1"/>
</dbReference>
<dbReference type="Pfam" id="PF10385">
    <property type="entry name" value="RNA_pol_Rpb2_45"/>
    <property type="match status" value="1"/>
</dbReference>
<dbReference type="Pfam" id="PF00562">
    <property type="entry name" value="RNA_pol_Rpb2_6"/>
    <property type="match status" value="1"/>
</dbReference>
<dbReference type="Pfam" id="PF04560">
    <property type="entry name" value="RNA_pol_Rpb2_7"/>
    <property type="match status" value="1"/>
</dbReference>
<dbReference type="SUPFAM" id="SSF64484">
    <property type="entry name" value="beta and beta-prime subunits of DNA dependent RNA-polymerase"/>
    <property type="match status" value="1"/>
</dbReference>
<dbReference type="PROSITE" id="PS01166">
    <property type="entry name" value="RNA_POL_BETA"/>
    <property type="match status" value="1"/>
</dbReference>
<accession>B3DTE2</accession>
<protein>
    <recommendedName>
        <fullName evidence="1">DNA-directed RNA polymerase subunit beta</fullName>
        <shortName evidence="1">RNAP subunit beta</shortName>
        <ecNumber evidence="1">2.7.7.6</ecNumber>
    </recommendedName>
    <alternativeName>
        <fullName evidence="1">RNA polymerase subunit beta</fullName>
    </alternativeName>
    <alternativeName>
        <fullName evidence="1">Transcriptase subunit beta</fullName>
    </alternativeName>
</protein>
<evidence type="ECO:0000255" key="1">
    <source>
        <dbReference type="HAMAP-Rule" id="MF_01321"/>
    </source>
</evidence>
<evidence type="ECO:0000256" key="2">
    <source>
        <dbReference type="SAM" id="MobiDB-lite"/>
    </source>
</evidence>
<organism>
    <name type="scientific">Bifidobacterium longum (strain DJO10A)</name>
    <dbReference type="NCBI Taxonomy" id="205913"/>
    <lineage>
        <taxon>Bacteria</taxon>
        <taxon>Bacillati</taxon>
        <taxon>Actinomycetota</taxon>
        <taxon>Actinomycetes</taxon>
        <taxon>Bifidobacteriales</taxon>
        <taxon>Bifidobacteriaceae</taxon>
        <taxon>Bifidobacterium</taxon>
    </lineage>
</organism>
<name>RPOB_BIFLD</name>